<sequence>MIQFQPVLGSLKSYEAGKPIELVVREFGIDPDQIIKLGSNENPFGCAQPVVEAVQKAASKMPYYPDDSYLELKTALASKFDLTPDRIILGNGSDQVLDFACRCVLGPGDSILINRITFAMYRIYALQCGAKVHSTETVLHDLNAFLDLAKSIRPKIIFLCTPSNPIGDALFKSDVYDFLRQIPSNTLVVIDAAYMEFGKKKDSNTFISAKEVTDLFPNVFYTGTFSKAYGLGGMRIGYGIGSKELISNLYKMRPPFNVANLSALAATEALKNESHVESYLDNNLKEMKRYEKFAAEQSVEFIDSYANFITFFARKRGKSSTEISQSLLKQGIILRNLRSYDLNAIRITIGKPQQNDRVLTALNQEFS</sequence>
<evidence type="ECO:0000255" key="1">
    <source>
        <dbReference type="HAMAP-Rule" id="MF_01023"/>
    </source>
</evidence>
<reference key="1">
    <citation type="journal article" date="2006" name="Proc. Natl. Acad. Sci. U.S.A.">
        <title>Genome reduction in Leptospira borgpetersenii reflects limited transmission potential.</title>
        <authorList>
            <person name="Bulach D.M."/>
            <person name="Zuerner R.L."/>
            <person name="Wilson P."/>
            <person name="Seemann T."/>
            <person name="McGrath A."/>
            <person name="Cullen P.A."/>
            <person name="Davis J."/>
            <person name="Johnson M."/>
            <person name="Kuczek E."/>
            <person name="Alt D.P."/>
            <person name="Peterson-Burch B."/>
            <person name="Coppel R.L."/>
            <person name="Rood J.I."/>
            <person name="Davies J.K."/>
            <person name="Adler B."/>
        </authorList>
    </citation>
    <scope>NUCLEOTIDE SEQUENCE [LARGE SCALE GENOMIC DNA]</scope>
    <source>
        <strain>JB197</strain>
    </source>
</reference>
<protein>
    <recommendedName>
        <fullName evidence="1">Histidinol-phosphate aminotransferase</fullName>
        <ecNumber evidence="1">2.6.1.9</ecNumber>
    </recommendedName>
    <alternativeName>
        <fullName evidence="1">Imidazole acetol-phosphate transaminase</fullName>
    </alternativeName>
</protein>
<dbReference type="EC" id="2.6.1.9" evidence="1"/>
<dbReference type="EMBL" id="CP000350">
    <property type="protein sequence ID" value="ABJ76702.1"/>
    <property type="molecule type" value="Genomic_DNA"/>
</dbReference>
<dbReference type="RefSeq" id="WP_002751653.1">
    <property type="nucleotide sequence ID" value="NC_008510.1"/>
</dbReference>
<dbReference type="SMR" id="Q04QW8"/>
<dbReference type="KEGG" id="lbj:LBJ_2219"/>
<dbReference type="HOGENOM" id="CLU_017584_3_3_12"/>
<dbReference type="UniPathway" id="UPA00031">
    <property type="reaction ID" value="UER00012"/>
</dbReference>
<dbReference type="Proteomes" id="UP000000656">
    <property type="component" value="Chromosome 1"/>
</dbReference>
<dbReference type="GO" id="GO:0004400">
    <property type="term" value="F:histidinol-phosphate transaminase activity"/>
    <property type="evidence" value="ECO:0007669"/>
    <property type="project" value="UniProtKB-UniRule"/>
</dbReference>
<dbReference type="GO" id="GO:0030170">
    <property type="term" value="F:pyridoxal phosphate binding"/>
    <property type="evidence" value="ECO:0007669"/>
    <property type="project" value="InterPro"/>
</dbReference>
<dbReference type="GO" id="GO:0000105">
    <property type="term" value="P:L-histidine biosynthetic process"/>
    <property type="evidence" value="ECO:0007669"/>
    <property type="project" value="UniProtKB-UniRule"/>
</dbReference>
<dbReference type="CDD" id="cd00609">
    <property type="entry name" value="AAT_like"/>
    <property type="match status" value="1"/>
</dbReference>
<dbReference type="Gene3D" id="3.90.1150.10">
    <property type="entry name" value="Aspartate Aminotransferase, domain 1"/>
    <property type="match status" value="1"/>
</dbReference>
<dbReference type="Gene3D" id="3.40.640.10">
    <property type="entry name" value="Type I PLP-dependent aspartate aminotransferase-like (Major domain)"/>
    <property type="match status" value="1"/>
</dbReference>
<dbReference type="HAMAP" id="MF_01023">
    <property type="entry name" value="HisC_aminotrans_2"/>
    <property type="match status" value="1"/>
</dbReference>
<dbReference type="InterPro" id="IPR001917">
    <property type="entry name" value="Aminotrans_II_pyridoxalP_BS"/>
</dbReference>
<dbReference type="InterPro" id="IPR004839">
    <property type="entry name" value="Aminotransferase_I/II_large"/>
</dbReference>
<dbReference type="InterPro" id="IPR005861">
    <property type="entry name" value="HisP_aminotrans"/>
</dbReference>
<dbReference type="InterPro" id="IPR015424">
    <property type="entry name" value="PyrdxlP-dep_Trfase"/>
</dbReference>
<dbReference type="InterPro" id="IPR015421">
    <property type="entry name" value="PyrdxlP-dep_Trfase_major"/>
</dbReference>
<dbReference type="InterPro" id="IPR015422">
    <property type="entry name" value="PyrdxlP-dep_Trfase_small"/>
</dbReference>
<dbReference type="NCBIfam" id="TIGR01141">
    <property type="entry name" value="hisC"/>
    <property type="match status" value="1"/>
</dbReference>
<dbReference type="PANTHER" id="PTHR42885:SF2">
    <property type="entry name" value="HISTIDINOL-PHOSPHATE AMINOTRANSFERASE"/>
    <property type="match status" value="1"/>
</dbReference>
<dbReference type="PANTHER" id="PTHR42885">
    <property type="entry name" value="HISTIDINOL-PHOSPHATE AMINOTRANSFERASE-RELATED"/>
    <property type="match status" value="1"/>
</dbReference>
<dbReference type="Pfam" id="PF00155">
    <property type="entry name" value="Aminotran_1_2"/>
    <property type="match status" value="1"/>
</dbReference>
<dbReference type="SUPFAM" id="SSF53383">
    <property type="entry name" value="PLP-dependent transferases"/>
    <property type="match status" value="1"/>
</dbReference>
<dbReference type="PROSITE" id="PS00599">
    <property type="entry name" value="AA_TRANSFER_CLASS_2"/>
    <property type="match status" value="1"/>
</dbReference>
<proteinExistence type="inferred from homology"/>
<gene>
    <name evidence="1" type="primary">hisC</name>
    <name type="ordered locus">LBJ_2219</name>
</gene>
<organism>
    <name type="scientific">Leptospira borgpetersenii serovar Hardjo-bovis (strain JB197)</name>
    <dbReference type="NCBI Taxonomy" id="355277"/>
    <lineage>
        <taxon>Bacteria</taxon>
        <taxon>Pseudomonadati</taxon>
        <taxon>Spirochaetota</taxon>
        <taxon>Spirochaetia</taxon>
        <taxon>Leptospirales</taxon>
        <taxon>Leptospiraceae</taxon>
        <taxon>Leptospira</taxon>
    </lineage>
</organism>
<feature type="chain" id="PRO_0000319768" description="Histidinol-phosphate aminotransferase">
    <location>
        <begin position="1"/>
        <end position="367"/>
    </location>
</feature>
<feature type="modified residue" description="N6-(pyridoxal phosphate)lysine" evidence="1">
    <location>
        <position position="227"/>
    </location>
</feature>
<name>HIS8_LEPBJ</name>
<keyword id="KW-0028">Amino-acid biosynthesis</keyword>
<keyword id="KW-0032">Aminotransferase</keyword>
<keyword id="KW-0368">Histidine biosynthesis</keyword>
<keyword id="KW-0663">Pyridoxal phosphate</keyword>
<keyword id="KW-0808">Transferase</keyword>
<comment type="catalytic activity">
    <reaction evidence="1">
        <text>L-histidinol phosphate + 2-oxoglutarate = 3-(imidazol-4-yl)-2-oxopropyl phosphate + L-glutamate</text>
        <dbReference type="Rhea" id="RHEA:23744"/>
        <dbReference type="ChEBI" id="CHEBI:16810"/>
        <dbReference type="ChEBI" id="CHEBI:29985"/>
        <dbReference type="ChEBI" id="CHEBI:57766"/>
        <dbReference type="ChEBI" id="CHEBI:57980"/>
        <dbReference type="EC" id="2.6.1.9"/>
    </reaction>
</comment>
<comment type="cofactor">
    <cofactor evidence="1">
        <name>pyridoxal 5'-phosphate</name>
        <dbReference type="ChEBI" id="CHEBI:597326"/>
    </cofactor>
</comment>
<comment type="pathway">
    <text evidence="1">Amino-acid biosynthesis; L-histidine biosynthesis; L-histidine from 5-phospho-alpha-D-ribose 1-diphosphate: step 7/9.</text>
</comment>
<comment type="subunit">
    <text evidence="1">Homodimer.</text>
</comment>
<comment type="similarity">
    <text evidence="1">Belongs to the class-II pyridoxal-phosphate-dependent aminotransferase family. Histidinol-phosphate aminotransferase subfamily.</text>
</comment>
<accession>Q04QW8</accession>